<accession>A6TCE8</accession>
<evidence type="ECO:0000255" key="1">
    <source>
        <dbReference type="HAMAP-Rule" id="MF_00682"/>
    </source>
</evidence>
<protein>
    <recommendedName>
        <fullName evidence="1">Co-chaperone protein HscB</fullName>
    </recommendedName>
    <alternativeName>
        <fullName evidence="1">Hsc20</fullName>
    </alternativeName>
</protein>
<organism>
    <name type="scientific">Klebsiella pneumoniae subsp. pneumoniae (strain ATCC 700721 / MGH 78578)</name>
    <dbReference type="NCBI Taxonomy" id="272620"/>
    <lineage>
        <taxon>Bacteria</taxon>
        <taxon>Pseudomonadati</taxon>
        <taxon>Pseudomonadota</taxon>
        <taxon>Gammaproteobacteria</taxon>
        <taxon>Enterobacterales</taxon>
        <taxon>Enterobacteriaceae</taxon>
        <taxon>Klebsiella/Raoultella group</taxon>
        <taxon>Klebsiella</taxon>
        <taxon>Klebsiella pneumoniae complex</taxon>
    </lineage>
</organism>
<gene>
    <name evidence="1" type="primary">hscB</name>
    <name type="ordered locus">KPN78578_28080</name>
    <name type="ORF">KPN_02859</name>
</gene>
<feature type="chain" id="PRO_1000083013" description="Co-chaperone protein HscB">
    <location>
        <begin position="1"/>
        <end position="171"/>
    </location>
</feature>
<feature type="domain" description="J" evidence="1">
    <location>
        <begin position="2"/>
        <end position="74"/>
    </location>
</feature>
<comment type="function">
    <text evidence="1">Co-chaperone involved in the maturation of iron-sulfur cluster-containing proteins. Seems to help targeting proteins to be folded toward HscA.</text>
</comment>
<comment type="subunit">
    <text evidence="1">Interacts with HscA and stimulates its ATPase activity. Interacts with IscU.</text>
</comment>
<comment type="similarity">
    <text evidence="1">Belongs to the HscB family.</text>
</comment>
<reference key="1">
    <citation type="submission" date="2006-09" db="EMBL/GenBank/DDBJ databases">
        <authorList>
            <consortium name="The Klebsiella pneumonia Genome Sequencing Project"/>
            <person name="McClelland M."/>
            <person name="Sanderson E.K."/>
            <person name="Spieth J."/>
            <person name="Clifton W.S."/>
            <person name="Latreille P."/>
            <person name="Sabo A."/>
            <person name="Pepin K."/>
            <person name="Bhonagiri V."/>
            <person name="Porwollik S."/>
            <person name="Ali J."/>
            <person name="Wilson R.K."/>
        </authorList>
    </citation>
    <scope>NUCLEOTIDE SEQUENCE [LARGE SCALE GENOMIC DNA]</scope>
    <source>
        <strain>ATCC 700721 / MGH 78578</strain>
    </source>
</reference>
<proteinExistence type="inferred from homology"/>
<name>HSCB_KLEP7</name>
<dbReference type="EMBL" id="CP000647">
    <property type="protein sequence ID" value="ABR78269.1"/>
    <property type="molecule type" value="Genomic_DNA"/>
</dbReference>
<dbReference type="RefSeq" id="WP_004174835.1">
    <property type="nucleotide sequence ID" value="NC_009648.1"/>
</dbReference>
<dbReference type="SMR" id="A6TCE8"/>
<dbReference type="STRING" id="272620.KPN_02859"/>
<dbReference type="jPOST" id="A6TCE8"/>
<dbReference type="PaxDb" id="272620-KPN_02859"/>
<dbReference type="EnsemblBacteria" id="ABR78269">
    <property type="protein sequence ID" value="ABR78269"/>
    <property type="gene ID" value="KPN_02859"/>
</dbReference>
<dbReference type="KEGG" id="kpn:KPN_02859"/>
<dbReference type="HOGENOM" id="CLU_068529_2_0_6"/>
<dbReference type="Proteomes" id="UP000000265">
    <property type="component" value="Chromosome"/>
</dbReference>
<dbReference type="GO" id="GO:1990230">
    <property type="term" value="C:iron-sulfur cluster transfer complex"/>
    <property type="evidence" value="ECO:0007669"/>
    <property type="project" value="TreeGrafter"/>
</dbReference>
<dbReference type="GO" id="GO:0001671">
    <property type="term" value="F:ATPase activator activity"/>
    <property type="evidence" value="ECO:0007669"/>
    <property type="project" value="InterPro"/>
</dbReference>
<dbReference type="GO" id="GO:0051087">
    <property type="term" value="F:protein-folding chaperone binding"/>
    <property type="evidence" value="ECO:0007669"/>
    <property type="project" value="InterPro"/>
</dbReference>
<dbReference type="GO" id="GO:0044571">
    <property type="term" value="P:[2Fe-2S] cluster assembly"/>
    <property type="evidence" value="ECO:0007669"/>
    <property type="project" value="InterPro"/>
</dbReference>
<dbReference type="GO" id="GO:0051259">
    <property type="term" value="P:protein complex oligomerization"/>
    <property type="evidence" value="ECO:0007669"/>
    <property type="project" value="InterPro"/>
</dbReference>
<dbReference type="GO" id="GO:0006457">
    <property type="term" value="P:protein folding"/>
    <property type="evidence" value="ECO:0007669"/>
    <property type="project" value="UniProtKB-UniRule"/>
</dbReference>
<dbReference type="CDD" id="cd06257">
    <property type="entry name" value="DnaJ"/>
    <property type="match status" value="1"/>
</dbReference>
<dbReference type="FunFam" id="1.10.287.110:FF:000008">
    <property type="entry name" value="Co-chaperone protein HscB"/>
    <property type="match status" value="1"/>
</dbReference>
<dbReference type="FunFam" id="1.20.1280.20:FF:000001">
    <property type="entry name" value="Co-chaperone protein HscB"/>
    <property type="match status" value="1"/>
</dbReference>
<dbReference type="Gene3D" id="1.10.287.110">
    <property type="entry name" value="DnaJ domain"/>
    <property type="match status" value="1"/>
</dbReference>
<dbReference type="Gene3D" id="1.20.1280.20">
    <property type="entry name" value="HscB, C-terminal domain"/>
    <property type="match status" value="1"/>
</dbReference>
<dbReference type="HAMAP" id="MF_00682">
    <property type="entry name" value="HscB"/>
    <property type="match status" value="1"/>
</dbReference>
<dbReference type="InterPro" id="IPR001623">
    <property type="entry name" value="DnaJ_domain"/>
</dbReference>
<dbReference type="InterPro" id="IPR004640">
    <property type="entry name" value="HscB"/>
</dbReference>
<dbReference type="InterPro" id="IPR036386">
    <property type="entry name" value="HscB_C_sf"/>
</dbReference>
<dbReference type="InterPro" id="IPR009073">
    <property type="entry name" value="HscB_oligo_C"/>
</dbReference>
<dbReference type="InterPro" id="IPR036869">
    <property type="entry name" value="J_dom_sf"/>
</dbReference>
<dbReference type="NCBIfam" id="TIGR00714">
    <property type="entry name" value="hscB"/>
    <property type="match status" value="1"/>
</dbReference>
<dbReference type="NCBIfam" id="NF003449">
    <property type="entry name" value="PRK05014.1"/>
    <property type="match status" value="1"/>
</dbReference>
<dbReference type="PANTHER" id="PTHR14021">
    <property type="entry name" value="IRON-SULFUR CLUSTER CO-CHAPERONE PROTEIN HSCB"/>
    <property type="match status" value="1"/>
</dbReference>
<dbReference type="PANTHER" id="PTHR14021:SF15">
    <property type="entry name" value="IRON-SULFUR CLUSTER CO-CHAPERONE PROTEIN HSCB"/>
    <property type="match status" value="1"/>
</dbReference>
<dbReference type="Pfam" id="PF00226">
    <property type="entry name" value="DnaJ"/>
    <property type="match status" value="1"/>
</dbReference>
<dbReference type="Pfam" id="PF07743">
    <property type="entry name" value="HSCB_C"/>
    <property type="match status" value="1"/>
</dbReference>
<dbReference type="SMART" id="SM00271">
    <property type="entry name" value="DnaJ"/>
    <property type="match status" value="1"/>
</dbReference>
<dbReference type="SUPFAM" id="SSF46565">
    <property type="entry name" value="Chaperone J-domain"/>
    <property type="match status" value="1"/>
</dbReference>
<dbReference type="SUPFAM" id="SSF47144">
    <property type="entry name" value="HSC20 (HSCB), C-terminal oligomerisation domain"/>
    <property type="match status" value="1"/>
</dbReference>
<dbReference type="PROSITE" id="PS50076">
    <property type="entry name" value="DNAJ_2"/>
    <property type="match status" value="1"/>
</dbReference>
<keyword id="KW-0143">Chaperone</keyword>
<sequence length="171" mass="19824">MDYFTLFGLPASYTLSLEQLAVRYQDLQRQYHPDKFASAPAAEQLAAVQHSATINQAWQTLRHPLTRAEYLLSLHGFDLASEQHTVRDTAFLMEQLELREELDEIGQAKDDARLEGFIKRVKALFDTRQQLMVDQLHNESWEAAADTVRKLRFLDKLRSSAEELEEKLLDF</sequence>